<protein>
    <recommendedName>
        <fullName>Macrophage mannose receptor 1</fullName>
        <shortName>MMR</shortName>
    </recommendedName>
    <alternativeName>
        <fullName>C-type lectin domain family 13 member D</fullName>
    </alternativeName>
    <alternativeName>
        <fullName>C-type lectin domain family 13 member D-like</fullName>
    </alternativeName>
    <alternativeName>
        <fullName>Human mannose receptor</fullName>
        <shortName>hMR</shortName>
    </alternativeName>
    <alternativeName>
        <fullName>Macrophage mannose receptor 1-like protein 1</fullName>
    </alternativeName>
    <cdAntigenName>CD206</cdAntigenName>
</protein>
<keyword id="KW-0002">3D-structure</keyword>
<keyword id="KW-0025">Alternative splicing</keyword>
<keyword id="KW-0106">Calcium</keyword>
<keyword id="KW-1003">Cell membrane</keyword>
<keyword id="KW-0903">Direct protein sequencing</keyword>
<keyword id="KW-1015">Disulfide bond</keyword>
<keyword id="KW-0254">Endocytosis</keyword>
<keyword id="KW-0967">Endosome</keyword>
<keyword id="KW-0325">Glycoprotein</keyword>
<keyword id="KW-1183">Host cell receptor for virus entry</keyword>
<keyword id="KW-0945">Host-virus interaction</keyword>
<keyword id="KW-0430">Lectin</keyword>
<keyword id="KW-0472">Membrane</keyword>
<keyword id="KW-1267">Proteomics identification</keyword>
<keyword id="KW-0675">Receptor</keyword>
<keyword id="KW-1185">Reference proteome</keyword>
<keyword id="KW-0677">Repeat</keyword>
<keyword id="KW-0732">Signal</keyword>
<keyword id="KW-0812">Transmembrane</keyword>
<keyword id="KW-1133">Transmembrane helix</keyword>
<name>MRC1_HUMAN</name>
<sequence>MRLPLLLVFASVIPGAVLLLDTRQFLIYNEDHKRCVDAVSPSAVQTAACNQDAESQKFRWVSESQIMSVAFKLCLGVPSKTDWVAITLYACDSKSEFQKWECKNDTLLGIKGEDLFFNYGNRQEKNIMLYKGSGLWSRWKIYGTTDNLCSRGYEAMYTLLGNANGATCAFPFKFENKWYADCTSAGRSDGWLWCGTTTDYDTDKLFGYCPLKFEGSESLWNKDPLTSVSYQINSKSALTWHQARKSCQQQNAELLSITEIHEQTYLTGLTSSLTSGLWIGLNSLSFNSGWQWSDRSPFRYLNWLPGSPSAEPGKSCVSLNPGKNAKWENLECVQKLGYICKKGNTTLNSFVIPSESDVPTHCPSQWWPYAGHCYKIHRDEKKIQRDALTTCRKEGGDLTSIHTIEELDFIISQLGYEPNDELWIGLNDIKIQMYFEWSDGTPVTFTKWLRGEPSHENNRQEDCVVMKGKDGYWADRGCEWPLGYICKMKSRSQGPEIVEVEKGCRKGWKKHHFYCYMIGHTLSTFAEANQTCNNENAYLTTIEDRYEQAFLTSFVGLRPEKYFWTGLSDIQTKGTFQWTIEEEVRFTHWNSDMPGRKPGCVAMRTGIAGGLWDVLKCDEKAKFVCKHWAEGVTHPPKPTTTPEPKCPEDWGASSRTSLCFKLYAKGKHEKKTWFESRDFCRALGGDLASINNKEEQQTIWRLITASGSYHKLFWLGLTYGSPSEGFTWSDGSPVSYENWAYGEPNNYQNVEYCGELKGDPTMSWNDINCEHLNNWICQIQKGQTPKPEPTPAPQDNPPVTEDGWVIYKDYQYYFSKEKETMDNARAFCKRNFGDLVSIQSESEKKFLWKYVNRNDAQSAYFIGLLISLDKKFAWMDGSKVDYVSWATGEPNFANEDENCVTMYSNSGFWNDINCGYPNAFICQRHNSSINATTVMPTMPSVPSGCKEGWNFYSNKCFKIFGFMEEERKNWQEARKACIGFGGNLVSIQNEKEQAFLTYHMKDSTFSAWTGLNDVNSEHTFLWTDGRGVHYTNWGKGYPGGRRSSLSYEDADCVVIIGGASNEAGKWMDDTCDSKRGYICQTRSDPSLTNPPATIQTDGFVKYGKSSYSLMRQKFQWHEAETYCKLHNSLIASILDPYSNAFAWLQMETSNERVWIALNSNLTDNQYTWTDKWRVRYTNWAADEPKLKSACVYLDLDGYWKTAHCNESFYFLCKRSDEIPATEPPQLPGRCPESDHTAWIPFHGHCYYIESSYTRNWGQASLECLRMGSSLVSIESAAESSFLSYRVEPLKSKTNFWIGLFRNVEGTWLWINNSPVSFVNWNTGDPSGERNDCVALHASSGFWSNIHCSSYKGYICKRPKIIDAKPTHELLTTKADTRKMDPSKPSSNVAGVVIIVILLILTGAGLAAYFFYKKRRVHLPQEGAFENTLYFNSQSSPGTSDMKDLVGNIEQNEHSVI</sequence>
<dbReference type="EMBL" id="J05550">
    <property type="protein sequence ID" value="AAA59868.1"/>
    <property type="molecule type" value="mRNA"/>
</dbReference>
<dbReference type="EMBL" id="X55635">
    <property type="status" value="NOT_ANNOTATED_CDS"/>
    <property type="molecule type" value="mRNA"/>
</dbReference>
<dbReference type="EMBL" id="M93221">
    <property type="protein sequence ID" value="AAA60389.1"/>
    <property type="molecule type" value="Genomic_DNA"/>
</dbReference>
<dbReference type="EMBL" id="M93192">
    <property type="protein sequence ID" value="AAA60389.1"/>
    <property type="status" value="JOINED"/>
    <property type="molecule type" value="Genomic_DNA"/>
</dbReference>
<dbReference type="EMBL" id="M93193">
    <property type="protein sequence ID" value="AAA60389.1"/>
    <property type="status" value="JOINED"/>
    <property type="molecule type" value="Genomic_DNA"/>
</dbReference>
<dbReference type="EMBL" id="M93194">
    <property type="protein sequence ID" value="AAA60389.1"/>
    <property type="status" value="JOINED"/>
    <property type="molecule type" value="Genomic_DNA"/>
</dbReference>
<dbReference type="EMBL" id="M93195">
    <property type="protein sequence ID" value="AAA60389.1"/>
    <property type="status" value="JOINED"/>
    <property type="molecule type" value="Genomic_DNA"/>
</dbReference>
<dbReference type="EMBL" id="M93196">
    <property type="protein sequence ID" value="AAA60389.1"/>
    <property type="status" value="JOINED"/>
    <property type="molecule type" value="Genomic_DNA"/>
</dbReference>
<dbReference type="EMBL" id="M93197">
    <property type="protein sequence ID" value="AAA60389.1"/>
    <property type="status" value="JOINED"/>
    <property type="molecule type" value="Genomic_DNA"/>
</dbReference>
<dbReference type="EMBL" id="M93198">
    <property type="protein sequence ID" value="AAA60389.1"/>
    <property type="status" value="JOINED"/>
    <property type="molecule type" value="Genomic_DNA"/>
</dbReference>
<dbReference type="EMBL" id="M93199">
    <property type="protein sequence ID" value="AAA60389.1"/>
    <property type="status" value="JOINED"/>
    <property type="molecule type" value="Genomic_DNA"/>
</dbReference>
<dbReference type="EMBL" id="M93200">
    <property type="protein sequence ID" value="AAA60389.1"/>
    <property type="status" value="JOINED"/>
    <property type="molecule type" value="Genomic_DNA"/>
</dbReference>
<dbReference type="EMBL" id="M93201">
    <property type="protein sequence ID" value="AAA60389.1"/>
    <property type="status" value="JOINED"/>
    <property type="molecule type" value="Genomic_DNA"/>
</dbReference>
<dbReference type="EMBL" id="M93202">
    <property type="protein sequence ID" value="AAA60389.1"/>
    <property type="status" value="JOINED"/>
    <property type="molecule type" value="Genomic_DNA"/>
</dbReference>
<dbReference type="EMBL" id="M93203">
    <property type="protein sequence ID" value="AAA60389.1"/>
    <property type="status" value="JOINED"/>
    <property type="molecule type" value="Genomic_DNA"/>
</dbReference>
<dbReference type="EMBL" id="M93204">
    <property type="protein sequence ID" value="AAA60389.1"/>
    <property type="status" value="JOINED"/>
    <property type="molecule type" value="Genomic_DNA"/>
</dbReference>
<dbReference type="EMBL" id="M93205">
    <property type="protein sequence ID" value="AAA60389.1"/>
    <property type="status" value="JOINED"/>
    <property type="molecule type" value="Genomic_DNA"/>
</dbReference>
<dbReference type="EMBL" id="M93206">
    <property type="protein sequence ID" value="AAA60389.1"/>
    <property type="status" value="JOINED"/>
    <property type="molecule type" value="Genomic_DNA"/>
</dbReference>
<dbReference type="EMBL" id="M93207">
    <property type="protein sequence ID" value="AAA60389.1"/>
    <property type="status" value="JOINED"/>
    <property type="molecule type" value="Genomic_DNA"/>
</dbReference>
<dbReference type="EMBL" id="M93208">
    <property type="protein sequence ID" value="AAA60389.1"/>
    <property type="status" value="JOINED"/>
    <property type="molecule type" value="Genomic_DNA"/>
</dbReference>
<dbReference type="EMBL" id="M93209">
    <property type="protein sequence ID" value="AAA60389.1"/>
    <property type="status" value="JOINED"/>
    <property type="molecule type" value="Genomic_DNA"/>
</dbReference>
<dbReference type="EMBL" id="M93210">
    <property type="protein sequence ID" value="AAA60389.1"/>
    <property type="status" value="JOINED"/>
    <property type="molecule type" value="Genomic_DNA"/>
</dbReference>
<dbReference type="EMBL" id="M93211">
    <property type="protein sequence ID" value="AAA60389.1"/>
    <property type="status" value="JOINED"/>
    <property type="molecule type" value="Genomic_DNA"/>
</dbReference>
<dbReference type="EMBL" id="M93212">
    <property type="protein sequence ID" value="AAA60389.1"/>
    <property type="status" value="JOINED"/>
    <property type="molecule type" value="Genomic_DNA"/>
</dbReference>
<dbReference type="EMBL" id="M93213">
    <property type="protein sequence ID" value="AAA60389.1"/>
    <property type="status" value="JOINED"/>
    <property type="molecule type" value="Genomic_DNA"/>
</dbReference>
<dbReference type="EMBL" id="M93214">
    <property type="protein sequence ID" value="AAA60389.1"/>
    <property type="status" value="JOINED"/>
    <property type="molecule type" value="Genomic_DNA"/>
</dbReference>
<dbReference type="EMBL" id="M93215">
    <property type="protein sequence ID" value="AAA60389.1"/>
    <property type="status" value="JOINED"/>
    <property type="molecule type" value="Genomic_DNA"/>
</dbReference>
<dbReference type="EMBL" id="M93216">
    <property type="protein sequence ID" value="AAA60389.1"/>
    <property type="status" value="JOINED"/>
    <property type="molecule type" value="Genomic_DNA"/>
</dbReference>
<dbReference type="EMBL" id="M93217">
    <property type="protein sequence ID" value="AAA60389.1"/>
    <property type="status" value="JOINED"/>
    <property type="molecule type" value="Genomic_DNA"/>
</dbReference>
<dbReference type="EMBL" id="M93218">
    <property type="protein sequence ID" value="AAA60389.1"/>
    <property type="status" value="JOINED"/>
    <property type="molecule type" value="Genomic_DNA"/>
</dbReference>
<dbReference type="EMBL" id="M93219">
    <property type="protein sequence ID" value="AAA60389.1"/>
    <property type="status" value="JOINED"/>
    <property type="molecule type" value="Genomic_DNA"/>
</dbReference>
<dbReference type="EMBL" id="M93220">
    <property type="protein sequence ID" value="AAA60389.1"/>
    <property type="status" value="JOINED"/>
    <property type="molecule type" value="Genomic_DNA"/>
</dbReference>
<dbReference type="EMBL" id="EF444997">
    <property type="protein sequence ID" value="ACA06020.1"/>
    <property type="molecule type" value="Genomic_DNA"/>
</dbReference>
<dbReference type="EMBL" id="AL928729">
    <property type="protein sequence ID" value="CAH70733.1"/>
    <property type="status" value="ALT_SEQ"/>
    <property type="molecule type" value="Genomic_DNA"/>
</dbReference>
<dbReference type="EMBL" id="AC069023">
    <property type="protein sequence ID" value="CAH70733.1"/>
    <property type="status" value="JOINED"/>
    <property type="molecule type" value="Genomic_DNA"/>
</dbReference>
<dbReference type="EMBL" id="AL928580">
    <property type="protein sequence ID" value="CAH71176.1"/>
    <property type="status" value="ALT_SEQ"/>
    <property type="molecule type" value="Genomic_DNA"/>
</dbReference>
<dbReference type="EMBL" id="AL139238">
    <property type="protein sequence ID" value="CAH71176.1"/>
    <property type="status" value="JOINED"/>
    <property type="molecule type" value="Genomic_DNA"/>
</dbReference>
<dbReference type="EMBL" id="BX255924">
    <property type="protein sequence ID" value="CAH71176.1"/>
    <property type="status" value="JOINED"/>
    <property type="molecule type" value="Genomic_DNA"/>
</dbReference>
<dbReference type="EMBL" id="BX255924">
    <property type="protein sequence ID" value="CAI15339.1"/>
    <property type="status" value="ALT_SEQ"/>
    <property type="molecule type" value="Genomic_DNA"/>
</dbReference>
<dbReference type="EMBL" id="AL139238">
    <property type="protein sequence ID" value="CAI15339.1"/>
    <property type="status" value="JOINED"/>
    <property type="molecule type" value="Genomic_DNA"/>
</dbReference>
<dbReference type="EMBL" id="AL928580">
    <property type="protein sequence ID" value="CAI15339.1"/>
    <property type="status" value="JOINED"/>
    <property type="molecule type" value="Genomic_DNA"/>
</dbReference>
<dbReference type="EMBL" id="BC142642">
    <property type="protein sequence ID" value="AAI42643.1"/>
    <property type="molecule type" value="mRNA"/>
</dbReference>
<dbReference type="CCDS" id="CCDS7123.2">
    <molecule id="P22897-1"/>
</dbReference>
<dbReference type="PIR" id="A36563">
    <property type="entry name" value="A36563"/>
</dbReference>
<dbReference type="RefSeq" id="NP_002429.1">
    <molecule id="P22897-1"/>
    <property type="nucleotide sequence ID" value="NM_002438.4"/>
</dbReference>
<dbReference type="PDB" id="1EGG">
    <property type="method" value="X-ray"/>
    <property type="resolution" value="2.30 A"/>
    <property type="chains" value="A/B=644-787"/>
</dbReference>
<dbReference type="PDB" id="1EGI">
    <property type="method" value="X-ray"/>
    <property type="resolution" value="2.30 A"/>
    <property type="chains" value="A/B=644-787"/>
</dbReference>
<dbReference type="PDB" id="5XTS">
    <property type="method" value="X-ray"/>
    <property type="resolution" value="2.00 A"/>
    <property type="chains" value="A=22-629"/>
</dbReference>
<dbReference type="PDB" id="5XTW">
    <property type="method" value="X-ray"/>
    <property type="resolution" value="3.20 A"/>
    <property type="chains" value="A/B/C/D/E/F/G/H=22-490"/>
</dbReference>
<dbReference type="PDB" id="6INN">
    <property type="method" value="X-ray"/>
    <property type="resolution" value="3.00 A"/>
    <property type="chains" value="A/B/C/D=22-629"/>
</dbReference>
<dbReference type="PDB" id="6INO">
    <property type="method" value="X-ray"/>
    <property type="resolution" value="3.05 A"/>
    <property type="chains" value="A/B=22-490"/>
</dbReference>
<dbReference type="PDB" id="6INU">
    <property type="method" value="X-ray"/>
    <property type="resolution" value="2.65 A"/>
    <property type="chains" value="A/B=22-490"/>
</dbReference>
<dbReference type="PDB" id="6INV">
    <property type="method" value="X-ray"/>
    <property type="resolution" value="3.30 A"/>
    <property type="chains" value="A=22-490"/>
</dbReference>
<dbReference type="PDB" id="6IOE">
    <property type="method" value="X-ray"/>
    <property type="resolution" value="2.90 A"/>
    <property type="chains" value="A/B=22-490"/>
</dbReference>
<dbReference type="PDB" id="7JUB">
    <property type="method" value="X-ray"/>
    <property type="resolution" value="1.20 A"/>
    <property type="chains" value="A=646-779"/>
</dbReference>
<dbReference type="PDB" id="7JUC">
    <property type="method" value="X-ray"/>
    <property type="resolution" value="1.40 A"/>
    <property type="chains" value="A=646-779"/>
</dbReference>
<dbReference type="PDB" id="7JUD">
    <property type="method" value="X-ray"/>
    <property type="resolution" value="1.40 A"/>
    <property type="chains" value="A/B=646-779"/>
</dbReference>
<dbReference type="PDB" id="7JUE">
    <property type="method" value="X-ray"/>
    <property type="resolution" value="1.40 A"/>
    <property type="chains" value="A=646-779"/>
</dbReference>
<dbReference type="PDB" id="7JUF">
    <property type="method" value="X-ray"/>
    <property type="resolution" value="1.40 A"/>
    <property type="chains" value="A/B=646-779"/>
</dbReference>
<dbReference type="PDB" id="7JUG">
    <property type="method" value="X-ray"/>
    <property type="resolution" value="1.40 A"/>
    <property type="chains" value="A=646-779"/>
</dbReference>
<dbReference type="PDB" id="7JUH">
    <property type="method" value="X-ray"/>
    <property type="resolution" value="1.40 A"/>
    <property type="chains" value="A=646-779"/>
</dbReference>
<dbReference type="PDB" id="7L61">
    <property type="method" value="X-ray"/>
    <property type="resolution" value="1.35 A"/>
    <property type="chains" value="A=646-779"/>
</dbReference>
<dbReference type="PDB" id="7L62">
    <property type="method" value="X-ray"/>
    <property type="resolution" value="1.55 A"/>
    <property type="chains" value="A=646-779"/>
</dbReference>
<dbReference type="PDB" id="7L63">
    <property type="method" value="X-ray"/>
    <property type="resolution" value="1.65 A"/>
    <property type="chains" value="A=646-779"/>
</dbReference>
<dbReference type="PDB" id="7L64">
    <property type="method" value="X-ray"/>
    <property type="resolution" value="1.35 A"/>
    <property type="chains" value="A=646-779"/>
</dbReference>
<dbReference type="PDB" id="7L65">
    <property type="method" value="X-ray"/>
    <property type="resolution" value="1.35 A"/>
    <property type="chains" value="A=646-779"/>
</dbReference>
<dbReference type="PDB" id="7L66">
    <property type="method" value="X-ray"/>
    <property type="resolution" value="1.75 A"/>
    <property type="chains" value="A=646-779"/>
</dbReference>
<dbReference type="PDB" id="7L67">
    <property type="method" value="X-ray"/>
    <property type="resolution" value="1.20 A"/>
    <property type="chains" value="A=646-779"/>
</dbReference>
<dbReference type="PDB" id="7L68">
    <property type="method" value="X-ray"/>
    <property type="resolution" value="1.40 A"/>
    <property type="chains" value="A/B=646-779"/>
</dbReference>
<dbReference type="PDBsum" id="1EGG"/>
<dbReference type="PDBsum" id="1EGI"/>
<dbReference type="PDBsum" id="5XTS"/>
<dbReference type="PDBsum" id="5XTW"/>
<dbReference type="PDBsum" id="6INN"/>
<dbReference type="PDBsum" id="6INO"/>
<dbReference type="PDBsum" id="6INU"/>
<dbReference type="PDBsum" id="6INV"/>
<dbReference type="PDBsum" id="6IOE"/>
<dbReference type="PDBsum" id="7JUB"/>
<dbReference type="PDBsum" id="7JUC"/>
<dbReference type="PDBsum" id="7JUD"/>
<dbReference type="PDBsum" id="7JUE"/>
<dbReference type="PDBsum" id="7JUF"/>
<dbReference type="PDBsum" id="7JUG"/>
<dbReference type="PDBsum" id="7JUH"/>
<dbReference type="PDBsum" id="7L61"/>
<dbReference type="PDBsum" id="7L62"/>
<dbReference type="PDBsum" id="7L63"/>
<dbReference type="PDBsum" id="7L64"/>
<dbReference type="PDBsum" id="7L65"/>
<dbReference type="PDBsum" id="7L66"/>
<dbReference type="PDBsum" id="7L67"/>
<dbReference type="PDBsum" id="7L68"/>
<dbReference type="SASBDB" id="P22897"/>
<dbReference type="SMR" id="P22897"/>
<dbReference type="BioGRID" id="110500">
    <property type="interactions" value="6"/>
</dbReference>
<dbReference type="DIP" id="DIP-101N"/>
<dbReference type="FunCoup" id="P22897">
    <property type="interactions" value="179"/>
</dbReference>
<dbReference type="IntAct" id="P22897">
    <property type="interactions" value="4"/>
</dbReference>
<dbReference type="STRING" id="9606.ENSP00000455897"/>
<dbReference type="BindingDB" id="P22897"/>
<dbReference type="ChEMBL" id="CHEMBL2176854"/>
<dbReference type="DrugBank" id="DB09266">
    <property type="generic name" value="Technetium Tc-99m tilmanocept"/>
</dbReference>
<dbReference type="UniLectin" id="P22897"/>
<dbReference type="GlyConnect" id="1956">
    <property type="glycosylation" value="26 N-Linked glycans (6 sites)"/>
</dbReference>
<dbReference type="GlyCosmos" id="P22897">
    <property type="glycosylation" value="12 sites, 32 glycans"/>
</dbReference>
<dbReference type="GlyGen" id="P22897">
    <property type="glycosylation" value="12 sites, 45 N-linked glycans (6 sites), 2 O-linked glycans (4 sites)"/>
</dbReference>
<dbReference type="iPTMnet" id="P22897"/>
<dbReference type="PhosphoSitePlus" id="P22897"/>
<dbReference type="BioMuta" id="MRC1"/>
<dbReference type="DMDM" id="126730"/>
<dbReference type="jPOST" id="P22897"/>
<dbReference type="MassIVE" id="P22897"/>
<dbReference type="PaxDb" id="9606-ENSP00000455897"/>
<dbReference type="PeptideAtlas" id="P22897"/>
<dbReference type="ProteomicsDB" id="54048">
    <molecule id="P22897-1"/>
</dbReference>
<dbReference type="ProteomicsDB" id="54049">
    <molecule id="P22897-2"/>
</dbReference>
<dbReference type="ABCD" id="P22897">
    <property type="antibodies" value="1 sequenced antibody"/>
</dbReference>
<dbReference type="Antibodypedia" id="72990">
    <property type="antibodies" value="839 antibodies from 43 providers"/>
</dbReference>
<dbReference type="DNASU" id="4360"/>
<dbReference type="Ensembl" id="ENST00000569591.3">
    <molecule id="P22897-1"/>
    <property type="protein sequence ID" value="ENSP00000455897.1"/>
    <property type="gene ID" value="ENSG00000260314.3"/>
</dbReference>
<dbReference type="GeneID" id="4360"/>
<dbReference type="KEGG" id="hsa:4360"/>
<dbReference type="MANE-Select" id="ENST00000569591.3">
    <property type="protein sequence ID" value="ENSP00000455897.1"/>
    <property type="RefSeq nucleotide sequence ID" value="NM_002438.4"/>
    <property type="RefSeq protein sequence ID" value="NP_002429.1"/>
</dbReference>
<dbReference type="UCSC" id="uc031ptj.2">
    <molecule id="P22897-1"/>
    <property type="organism name" value="human"/>
</dbReference>
<dbReference type="AGR" id="HGNC:7228"/>
<dbReference type="CTD" id="4360"/>
<dbReference type="DisGeNET" id="4360"/>
<dbReference type="GeneCards" id="MRC1"/>
<dbReference type="HGNC" id="HGNC:7228">
    <property type="gene designation" value="MRC1"/>
</dbReference>
<dbReference type="HPA" id="ENSG00000260314">
    <property type="expression patterns" value="Tissue enhanced (lung)"/>
</dbReference>
<dbReference type="MIM" id="153618">
    <property type="type" value="gene"/>
</dbReference>
<dbReference type="neXtProt" id="NX_P22897"/>
<dbReference type="OpenTargets" id="ENSG00000260314"/>
<dbReference type="PharmGKB" id="PA30933"/>
<dbReference type="VEuPathDB" id="HostDB:ENSG00000260314"/>
<dbReference type="eggNOG" id="KOG4297">
    <property type="taxonomic scope" value="Eukaryota"/>
</dbReference>
<dbReference type="GeneTree" id="ENSGT01050000244842"/>
<dbReference type="HOGENOM" id="CLU_002069_0_0_1"/>
<dbReference type="InParanoid" id="P22897"/>
<dbReference type="OMA" id="WIDKWRV"/>
<dbReference type="OrthoDB" id="6356110at2759"/>
<dbReference type="PAN-GO" id="P22897">
    <property type="GO annotations" value="3 GO annotations based on evolutionary models"/>
</dbReference>
<dbReference type="PhylomeDB" id="P22897"/>
<dbReference type="TreeFam" id="TF316663"/>
<dbReference type="PathwayCommons" id="P22897"/>
<dbReference type="Reactome" id="R-HSA-1236978">
    <property type="pathway name" value="Cross-presentation of soluble exogenous antigens (endosomes)"/>
</dbReference>
<dbReference type="Reactome" id="R-HSA-9637628">
    <property type="pathway name" value="Modulation by Mtb of host immune system"/>
</dbReference>
<dbReference type="SignaLink" id="P22897"/>
<dbReference type="SIGNOR" id="P22897"/>
<dbReference type="BioGRID-ORCS" id="4360">
    <property type="hits" value="7 hits in 1052 CRISPR screens"/>
</dbReference>
<dbReference type="ChiTaRS" id="MRC1">
    <property type="organism name" value="human"/>
</dbReference>
<dbReference type="EvolutionaryTrace" id="P22897"/>
<dbReference type="GenomeRNAi" id="4360"/>
<dbReference type="Pharos" id="P22897">
    <property type="development level" value="Tbio"/>
</dbReference>
<dbReference type="PRO" id="PR:P22897"/>
<dbReference type="Proteomes" id="UP000005640">
    <property type="component" value="Chromosome 10"/>
</dbReference>
<dbReference type="RNAct" id="P22897">
    <property type="molecule type" value="protein"/>
</dbReference>
<dbReference type="Bgee" id="ENSG00000260314">
    <property type="expression patterns" value="Expressed in lower lobe of lung and 187 other cell types or tissues"/>
</dbReference>
<dbReference type="GO" id="GO:0009986">
    <property type="term" value="C:cell surface"/>
    <property type="evidence" value="ECO:0007669"/>
    <property type="project" value="Ensembl"/>
</dbReference>
<dbReference type="GO" id="GO:0010008">
    <property type="term" value="C:endosome membrane"/>
    <property type="evidence" value="ECO:0000314"/>
    <property type="project" value="UniProtKB"/>
</dbReference>
<dbReference type="GO" id="GO:0005886">
    <property type="term" value="C:plasma membrane"/>
    <property type="evidence" value="ECO:0000314"/>
    <property type="project" value="UniProtKB"/>
</dbReference>
<dbReference type="GO" id="GO:0038024">
    <property type="term" value="F:cargo receptor activity"/>
    <property type="evidence" value="ECO:0000314"/>
    <property type="project" value="UniProtKB"/>
</dbReference>
<dbReference type="GO" id="GO:0005537">
    <property type="term" value="F:D-mannose binding"/>
    <property type="evidence" value="ECO:0000304"/>
    <property type="project" value="ProtInc"/>
</dbReference>
<dbReference type="GO" id="GO:0038023">
    <property type="term" value="F:signaling receptor activity"/>
    <property type="evidence" value="ECO:0000318"/>
    <property type="project" value="GO_Central"/>
</dbReference>
<dbReference type="GO" id="GO:0004888">
    <property type="term" value="F:transmembrane signaling receptor activity"/>
    <property type="evidence" value="ECO:0007669"/>
    <property type="project" value="Ensembl"/>
</dbReference>
<dbReference type="GO" id="GO:0001618">
    <property type="term" value="F:virus receptor activity"/>
    <property type="evidence" value="ECO:0007669"/>
    <property type="project" value="UniProtKB-KW"/>
</dbReference>
<dbReference type="GO" id="GO:0071353">
    <property type="term" value="P:cellular response to interleukin-4"/>
    <property type="evidence" value="ECO:0007669"/>
    <property type="project" value="Ensembl"/>
</dbReference>
<dbReference type="GO" id="GO:0071222">
    <property type="term" value="P:cellular response to lipopolysaccharide"/>
    <property type="evidence" value="ECO:0007669"/>
    <property type="project" value="Ensembl"/>
</dbReference>
<dbReference type="GO" id="GO:0071346">
    <property type="term" value="P:cellular response to type II interferon"/>
    <property type="evidence" value="ECO:0007669"/>
    <property type="project" value="Ensembl"/>
</dbReference>
<dbReference type="GO" id="GO:0006898">
    <property type="term" value="P:receptor-mediated endocytosis"/>
    <property type="evidence" value="ECO:0000314"/>
    <property type="project" value="UniProtKB"/>
</dbReference>
<dbReference type="CDD" id="cd23407">
    <property type="entry name" value="beta-trefoil_Ricin_MRC1"/>
    <property type="match status" value="1"/>
</dbReference>
<dbReference type="CDD" id="cd00037">
    <property type="entry name" value="CLECT"/>
    <property type="match status" value="7"/>
</dbReference>
<dbReference type="CDD" id="cd00062">
    <property type="entry name" value="FN2"/>
    <property type="match status" value="1"/>
</dbReference>
<dbReference type="FunFam" id="2.10.10.10:FF:000001">
    <property type="entry name" value="Fibronectin 1a isoform 1"/>
    <property type="match status" value="1"/>
</dbReference>
<dbReference type="FunFam" id="3.10.100.10:FF:000014">
    <property type="entry name" value="Macrophage mannose receptor 1"/>
    <property type="match status" value="1"/>
</dbReference>
<dbReference type="FunFam" id="3.10.100.10:FF:000023">
    <property type="entry name" value="Macrophage mannose receptor 1"/>
    <property type="match status" value="1"/>
</dbReference>
<dbReference type="FunFam" id="2.80.10.50:FF:000032">
    <property type="entry name" value="macrophage mannose receptor 1"/>
    <property type="match status" value="1"/>
</dbReference>
<dbReference type="FunFam" id="3.10.100.10:FF:000016">
    <property type="entry name" value="macrophage mannose receptor 1"/>
    <property type="match status" value="1"/>
</dbReference>
<dbReference type="FunFam" id="3.10.100.10:FF:000031">
    <property type="entry name" value="macrophage mannose receptor 1"/>
    <property type="match status" value="1"/>
</dbReference>
<dbReference type="FunFam" id="3.10.100.10:FF:000022">
    <property type="entry name" value="Mannose receptor C-type 1"/>
    <property type="match status" value="1"/>
</dbReference>
<dbReference type="FunFam" id="3.10.100.10:FF:000025">
    <property type="entry name" value="Mannose receptor C-type 1"/>
    <property type="match status" value="1"/>
</dbReference>
<dbReference type="FunFam" id="3.10.100.10:FF:000030">
    <property type="entry name" value="Mannose receptor C-type 1"/>
    <property type="match status" value="1"/>
</dbReference>
<dbReference type="FunFam" id="3.10.100.10:FF:000027">
    <property type="entry name" value="Mannose receptor, C type 1"/>
    <property type="match status" value="1"/>
</dbReference>
<dbReference type="Gene3D" id="2.80.10.50">
    <property type="match status" value="1"/>
</dbReference>
<dbReference type="Gene3D" id="2.10.10.10">
    <property type="entry name" value="Fibronectin, type II, collagen-binding"/>
    <property type="match status" value="1"/>
</dbReference>
<dbReference type="Gene3D" id="3.10.100.10">
    <property type="entry name" value="Mannose-Binding Protein A, subunit A"/>
    <property type="match status" value="8"/>
</dbReference>
<dbReference type="InterPro" id="IPR001304">
    <property type="entry name" value="C-type_lectin-like"/>
</dbReference>
<dbReference type="InterPro" id="IPR016186">
    <property type="entry name" value="C-type_lectin-like/link_sf"/>
</dbReference>
<dbReference type="InterPro" id="IPR050111">
    <property type="entry name" value="C-type_lectin/snaclec_domain"/>
</dbReference>
<dbReference type="InterPro" id="IPR018378">
    <property type="entry name" value="C-type_lectin_CS"/>
</dbReference>
<dbReference type="InterPro" id="IPR016187">
    <property type="entry name" value="CTDL_fold"/>
</dbReference>
<dbReference type="InterPro" id="IPR000562">
    <property type="entry name" value="FN_type2_dom"/>
</dbReference>
<dbReference type="InterPro" id="IPR036943">
    <property type="entry name" value="FN_type2_sf"/>
</dbReference>
<dbReference type="InterPro" id="IPR013806">
    <property type="entry name" value="Kringle-like"/>
</dbReference>
<dbReference type="InterPro" id="IPR035992">
    <property type="entry name" value="Ricin_B-like_lectins"/>
</dbReference>
<dbReference type="InterPro" id="IPR000772">
    <property type="entry name" value="Ricin_B_lectin"/>
</dbReference>
<dbReference type="PANTHER" id="PTHR22803">
    <property type="entry name" value="MANNOSE, PHOSPHOLIPASE, LECTIN RECEPTOR RELATED"/>
    <property type="match status" value="1"/>
</dbReference>
<dbReference type="Pfam" id="PF24562">
    <property type="entry name" value="CysR_MRC2_N"/>
    <property type="match status" value="1"/>
</dbReference>
<dbReference type="Pfam" id="PF00040">
    <property type="entry name" value="fn2"/>
    <property type="match status" value="1"/>
</dbReference>
<dbReference type="Pfam" id="PF00059">
    <property type="entry name" value="Lectin_C"/>
    <property type="match status" value="8"/>
</dbReference>
<dbReference type="PRINTS" id="PR00013">
    <property type="entry name" value="FNTYPEII"/>
</dbReference>
<dbReference type="SMART" id="SM00034">
    <property type="entry name" value="CLECT"/>
    <property type="match status" value="8"/>
</dbReference>
<dbReference type="SMART" id="SM00059">
    <property type="entry name" value="FN2"/>
    <property type="match status" value="1"/>
</dbReference>
<dbReference type="SMART" id="SM00458">
    <property type="entry name" value="RICIN"/>
    <property type="match status" value="1"/>
</dbReference>
<dbReference type="SUPFAM" id="SSF56436">
    <property type="entry name" value="C-type lectin-like"/>
    <property type="match status" value="8"/>
</dbReference>
<dbReference type="SUPFAM" id="SSF57440">
    <property type="entry name" value="Kringle-like"/>
    <property type="match status" value="1"/>
</dbReference>
<dbReference type="SUPFAM" id="SSF50370">
    <property type="entry name" value="Ricin B-like lectins"/>
    <property type="match status" value="1"/>
</dbReference>
<dbReference type="PROSITE" id="PS00615">
    <property type="entry name" value="C_TYPE_LECTIN_1"/>
    <property type="match status" value="6"/>
</dbReference>
<dbReference type="PROSITE" id="PS50041">
    <property type="entry name" value="C_TYPE_LECTIN_2"/>
    <property type="match status" value="8"/>
</dbReference>
<dbReference type="PROSITE" id="PS00023">
    <property type="entry name" value="FN2_1"/>
    <property type="match status" value="1"/>
</dbReference>
<dbReference type="PROSITE" id="PS51092">
    <property type="entry name" value="FN2_2"/>
    <property type="match status" value="1"/>
</dbReference>
<dbReference type="PROSITE" id="PS50231">
    <property type="entry name" value="RICIN_B_LECTIN"/>
    <property type="match status" value="1"/>
</dbReference>
<gene>
    <name type="primary">MRC1</name>
    <name type="synonym">CLEC13D</name>
    <name type="synonym">CLEC13DL</name>
    <name type="synonym">MRC1L1</name>
</gene>
<comment type="function">
    <text>Mediates the endocytosis of glycoproteins by macrophages. Binds both sulfated and non-sulfated polysaccharide chains.</text>
</comment>
<comment type="function">
    <text>(Microbial infection) Acts as a phagocytic receptor for bacteria, fungi and other pathogens.</text>
</comment>
<comment type="function">
    <text evidence="8">(Microbial infection) Acts as a receptor for Dengue virus envelope protein E.</text>
</comment>
<comment type="function">
    <text evidence="10">(Microbial infection) Interacts with Hepatitis B virus envelope protein.</text>
</comment>
<comment type="subunit">
    <text evidence="8">(Microbial infection) Interacts with Dengue virus.</text>
</comment>
<comment type="subunit">
    <text evidence="10">(Microbial infection) May act as a receptor for hepatitis B virus, enabling uptake of the virus in hepatic dendritic cells.</text>
</comment>
<comment type="subcellular location">
    <subcellularLocation>
        <location evidence="11">Endosome membrane</location>
        <topology evidence="11">Single-pass type I membrane protein</topology>
    </subcellularLocation>
    <subcellularLocation>
        <location evidence="11">Cell membrane</location>
        <topology evidence="11">Single-pass type I membrane protein</topology>
    </subcellularLocation>
</comment>
<comment type="alternative products">
    <event type="alternative splicing"/>
    <isoform>
        <id>P22897-1</id>
        <name>1</name>
        <sequence type="displayed"/>
    </isoform>
    <isoform>
        <id>P22897-2</id>
        <name>2</name>
        <sequence type="described" ref="VSP_041340 VSP_041341"/>
    </isoform>
</comment>
<comment type="domain">
    <text evidence="7">The C-type lectin domains, also called carbohydrate-recognition domains or CRDs, 1-3 have at most very weak affinity for carbohydrates. C-type lectin domain 4 shows the highest affinity binding and has multispecificity for a variety of monosaccharides. At least 3 C-type lectin domains (4, 5, and 7) are required for high affinity binding and endocytosis of multivalent glycoconjugates.</text>
</comment>
<comment type="polymorphism">
    <text>Genetic variations in MRC1 may influence susceptibility or resistance to leprosy in some populations. Particularly, Gly-396 seems to be a risk factor for leprosy when associated with Ala-399 and Phe-407.</text>
</comment>
<comment type="sequence caution" evidence="13">
    <conflict type="erroneous gene model prediction">
        <sequence resource="EMBL-CDS" id="CAH70733"/>
    </conflict>
</comment>
<comment type="sequence caution" evidence="13">
    <conflict type="erroneous gene model prediction">
        <sequence resource="EMBL-CDS" id="CAH71176"/>
    </conflict>
</comment>
<comment type="sequence caution" evidence="13">
    <conflict type="erroneous gene model prediction">
        <sequence resource="EMBL-CDS" id="CAI15339"/>
    </conflict>
</comment>
<comment type="online information" name="Functional Glycomics Gateway - Glycan Binding">
    <link uri="http://www.functionalglycomics.org/glycomics/GBPServlet?&amp;operationType=view&amp;cbpId=cbp_hum_Ctlect_00127"/>
    <text>Macrophage mannose receptor</text>
</comment>
<comment type="online information" name="Atlas of Genetics and Cytogenetics in Oncology and Haematology">
    <link uri="https://atlasgeneticsoncology.org/gene/44561/MRC1"/>
</comment>
<evidence type="ECO:0000250" key="1"/>
<evidence type="ECO:0000255" key="2"/>
<evidence type="ECO:0000255" key="3">
    <source>
        <dbReference type="PROSITE-ProRule" id="PRU00040"/>
    </source>
</evidence>
<evidence type="ECO:0000255" key="4">
    <source>
        <dbReference type="PROSITE-ProRule" id="PRU00174"/>
    </source>
</evidence>
<evidence type="ECO:0000255" key="5">
    <source>
        <dbReference type="PROSITE-ProRule" id="PRU00479"/>
    </source>
</evidence>
<evidence type="ECO:0000269" key="6">
    <source>
    </source>
</evidence>
<evidence type="ECO:0000269" key="7">
    <source>
    </source>
</evidence>
<evidence type="ECO:0000269" key="8">
    <source>
    </source>
</evidence>
<evidence type="ECO:0000269" key="9">
    <source>
    </source>
</evidence>
<evidence type="ECO:0000269" key="10">
    <source>
    </source>
</evidence>
<evidence type="ECO:0000269" key="11">
    <source>
    </source>
</evidence>
<evidence type="ECO:0000303" key="12">
    <source>
    </source>
</evidence>
<evidence type="ECO:0000305" key="13"/>
<evidence type="ECO:0007829" key="14">
    <source>
        <dbReference type="PDB" id="5XTS"/>
    </source>
</evidence>
<evidence type="ECO:0007829" key="15">
    <source>
        <dbReference type="PDB" id="6INN"/>
    </source>
</evidence>
<evidence type="ECO:0007829" key="16">
    <source>
        <dbReference type="PDB" id="6INU"/>
    </source>
</evidence>
<evidence type="ECO:0007829" key="17">
    <source>
        <dbReference type="PDB" id="6INV"/>
    </source>
</evidence>
<evidence type="ECO:0007829" key="18">
    <source>
        <dbReference type="PDB" id="6IOE"/>
    </source>
</evidence>
<evidence type="ECO:0007829" key="19">
    <source>
        <dbReference type="PDB" id="7JUB"/>
    </source>
</evidence>
<evidence type="ECO:0007829" key="20">
    <source>
        <dbReference type="PDB" id="7JUD"/>
    </source>
</evidence>
<evidence type="ECO:0007829" key="21">
    <source>
        <dbReference type="PDB" id="7L67"/>
    </source>
</evidence>
<feature type="signal peptide" evidence="2">
    <location>
        <begin position="1"/>
        <end position="18"/>
    </location>
</feature>
<feature type="chain" id="PRO_0000017548" description="Macrophage mannose receptor 1">
    <location>
        <begin position="19"/>
        <end position="1456"/>
    </location>
</feature>
<feature type="topological domain" description="Extracellular" evidence="2">
    <location>
        <begin position="19"/>
        <end position="1389"/>
    </location>
</feature>
<feature type="transmembrane region" description="Helical" evidence="2">
    <location>
        <begin position="1390"/>
        <end position="1410"/>
    </location>
</feature>
<feature type="topological domain" description="Cytoplasmic" evidence="2">
    <location>
        <begin position="1411"/>
        <end position="1456"/>
    </location>
</feature>
<feature type="domain" description="Ricin B-type lectin" evidence="4">
    <location>
        <begin position="22"/>
        <end position="142"/>
    </location>
</feature>
<feature type="domain" description="Fibronectin type-II" evidence="5">
    <location>
        <begin position="163"/>
        <end position="211"/>
    </location>
</feature>
<feature type="domain" description="C-type lectin 1" evidence="3">
    <location>
        <begin position="225"/>
        <end position="341"/>
    </location>
</feature>
<feature type="domain" description="C-type lectin 2" evidence="3">
    <location>
        <begin position="369"/>
        <end position="487"/>
    </location>
</feature>
<feature type="domain" description="C-type lectin 3" evidence="3">
    <location>
        <begin position="511"/>
        <end position="626"/>
    </location>
</feature>
<feature type="domain" description="C-type lectin 4" evidence="3">
    <location>
        <begin position="655"/>
        <end position="778"/>
    </location>
</feature>
<feature type="domain" description="C-type lectin 5" evidence="3">
    <location>
        <begin position="807"/>
        <end position="923"/>
    </location>
</feature>
<feature type="domain" description="C-type lectin 6" evidence="3">
    <location>
        <begin position="952"/>
        <end position="1080"/>
    </location>
</feature>
<feature type="domain" description="C-type lectin 7" evidence="3">
    <location>
        <begin position="1102"/>
        <end position="1213"/>
    </location>
</feature>
<feature type="domain" description="C-type lectin 8" evidence="3">
    <location>
        <begin position="1241"/>
        <end position="1356"/>
    </location>
</feature>
<feature type="glycosylation site" description="N-linked (GlcNAc...) asparagine" evidence="2">
    <location>
        <position position="104"/>
    </location>
</feature>
<feature type="glycosylation site" description="N-linked (GlcNAc...) asparagine" evidence="2">
    <location>
        <position position="344"/>
    </location>
</feature>
<feature type="glycosylation site" description="N-linked (GlcNAc...) asparagine" evidence="2">
    <location>
        <position position="529"/>
    </location>
</feature>
<feature type="glycosylation site" description="N-linked (GlcNAc...) asparagine" evidence="2">
    <location>
        <position position="926"/>
    </location>
</feature>
<feature type="glycosylation site" description="N-linked (GlcNAc...) asparagine" evidence="2">
    <location>
        <position position="930"/>
    </location>
</feature>
<feature type="glycosylation site" description="N-linked (GlcNAc...) asparagine" evidence="2">
    <location>
        <position position="1160"/>
    </location>
</feature>
<feature type="glycosylation site" description="N-linked (GlcNAc...) asparagine" evidence="9">
    <location>
        <position position="1205"/>
    </location>
</feature>
<feature type="disulfide bond" evidence="1">
    <location>
        <begin position="35"/>
        <end position="49"/>
    </location>
</feature>
<feature type="disulfide bond" evidence="1">
    <location>
        <begin position="74"/>
        <end position="91"/>
    </location>
</feature>
<feature type="disulfide bond" evidence="1">
    <location>
        <begin position="168"/>
        <end position="194"/>
    </location>
</feature>
<feature type="disulfide bond" evidence="1">
    <location>
        <begin position="182"/>
        <end position="209"/>
    </location>
</feature>
<feature type="disulfide bond" evidence="1">
    <location>
        <begin position="247"/>
        <end position="340"/>
    </location>
</feature>
<feature type="disulfide bond" evidence="1">
    <location>
        <begin position="316"/>
        <end position="332"/>
    </location>
</feature>
<feature type="disulfide bond" evidence="1">
    <location>
        <begin position="391"/>
        <end position="486"/>
    </location>
</feature>
<feature type="disulfide bond" evidence="1">
    <location>
        <begin position="463"/>
        <end position="478"/>
    </location>
</feature>
<feature type="disulfide bond" evidence="1">
    <location>
        <begin position="532"/>
        <end position="625"/>
    </location>
</feature>
<feature type="disulfide bond" evidence="1">
    <location>
        <begin position="600"/>
        <end position="617"/>
    </location>
</feature>
<feature type="disulfide bond">
    <location>
        <begin position="646"/>
        <end position="659"/>
    </location>
</feature>
<feature type="disulfide bond">
    <location>
        <begin position="680"/>
        <end position="777"/>
    </location>
</feature>
<feature type="disulfide bond">
    <location>
        <begin position="753"/>
        <end position="769"/>
    </location>
</feature>
<feature type="disulfide bond" evidence="1">
    <location>
        <begin position="828"/>
        <end position="922"/>
    </location>
</feature>
<feature type="disulfide bond" evidence="1">
    <location>
        <begin position="899"/>
        <end position="914"/>
    </location>
</feature>
<feature type="disulfide bond" evidence="1">
    <location>
        <begin position="977"/>
        <end position="1079"/>
    </location>
</feature>
<feature type="disulfide bond" evidence="1">
    <location>
        <begin position="1052"/>
        <end position="1071"/>
    </location>
</feature>
<feature type="disulfide bond" evidence="1">
    <location>
        <begin position="1123"/>
        <end position="1212"/>
    </location>
</feature>
<feature type="disulfide bond" evidence="1">
    <location>
        <begin position="1190"/>
        <end position="1204"/>
    </location>
</feature>
<feature type="disulfide bond" evidence="1">
    <location>
        <begin position="1263"/>
        <end position="1355"/>
    </location>
</feature>
<feature type="disulfide bond" evidence="1">
    <location>
        <begin position="1332"/>
        <end position="1347"/>
    </location>
</feature>
<feature type="splice variant" id="VSP_041340" description="In isoform 2." evidence="12">
    <original>DGYWADRGCEWPLGYICKMKSRSQGPEIV</original>
    <variation>AGVQWHNLGSMQPLPREFKRFSCLSLPSS</variation>
    <location>
        <begin position="470"/>
        <end position="498"/>
    </location>
</feature>
<feature type="splice variant" id="VSP_041341" description="In isoform 2." evidence="12">
    <location>
        <begin position="499"/>
        <end position="1456"/>
    </location>
</feature>
<feature type="sequence variant" id="VAR_019700" description="In dbSNP:rs2296414." evidence="11">
    <original>T</original>
    <variation>I</variation>
    <location>
        <position position="167"/>
    </location>
</feature>
<feature type="sequence variant" id="VAR_065250" description="Protective factor against leprosy; dbSNP:rs606231248." evidence="6">
    <original>G</original>
    <variation>S</variation>
    <location>
        <position position="396"/>
    </location>
</feature>
<feature type="sequence variant" id="VAR_065251" description="In dbSNP:rs71497223." evidence="6 11">
    <original>T</original>
    <variation>A</variation>
    <location>
        <position position="399"/>
    </location>
</feature>
<feature type="sequence variant" id="VAR_065252" description="In dbSNP:rs71497225." evidence="6 11">
    <original>L</original>
    <variation>F</variation>
    <location>
        <position position="407"/>
    </location>
</feature>
<feature type="sequence conflict" description="In Ref. 2; X55635." evidence="13" ref="2">
    <original>A</original>
    <variation>T</variation>
    <location>
        <position position="1334"/>
    </location>
</feature>
<feature type="strand" evidence="14">
    <location>
        <begin position="27"/>
        <end position="29"/>
    </location>
</feature>
<feature type="turn" evidence="14">
    <location>
        <begin position="30"/>
        <end position="33"/>
    </location>
</feature>
<feature type="strand" evidence="14">
    <location>
        <begin position="34"/>
        <end position="40"/>
    </location>
</feature>
<feature type="strand" evidence="14">
    <location>
        <begin position="43"/>
        <end position="48"/>
    </location>
</feature>
<feature type="helix" evidence="14">
    <location>
        <begin position="54"/>
        <end position="56"/>
    </location>
</feature>
<feature type="strand" evidence="14">
    <location>
        <begin position="58"/>
        <end position="60"/>
    </location>
</feature>
<feature type="strand" evidence="14">
    <location>
        <begin position="62"/>
        <end position="64"/>
    </location>
</feature>
<feature type="strand" evidence="14">
    <location>
        <begin position="66"/>
        <end position="68"/>
    </location>
</feature>
<feature type="turn" evidence="14">
    <location>
        <begin position="69"/>
        <end position="72"/>
    </location>
</feature>
<feature type="strand" evidence="14">
    <location>
        <begin position="73"/>
        <end position="76"/>
    </location>
</feature>
<feature type="strand" evidence="14">
    <location>
        <begin position="78"/>
        <end position="85"/>
    </location>
</feature>
<feature type="strand" evidence="14">
    <location>
        <begin position="87"/>
        <end position="89"/>
    </location>
</feature>
<feature type="helix" evidence="14">
    <location>
        <begin position="96"/>
        <end position="98"/>
    </location>
</feature>
<feature type="strand" evidence="14">
    <location>
        <begin position="100"/>
        <end position="103"/>
    </location>
</feature>
<feature type="turn" evidence="14">
    <location>
        <begin position="104"/>
        <end position="106"/>
    </location>
</feature>
<feature type="strand" evidence="14">
    <location>
        <begin position="107"/>
        <end position="110"/>
    </location>
</feature>
<feature type="strand" evidence="14">
    <location>
        <begin position="116"/>
        <end position="118"/>
    </location>
</feature>
<feature type="turn" evidence="16">
    <location>
        <begin position="122"/>
        <end position="124"/>
    </location>
</feature>
<feature type="strand" evidence="14">
    <location>
        <begin position="128"/>
        <end position="131"/>
    </location>
</feature>
<feature type="helix" evidence="14">
    <location>
        <begin position="135"/>
        <end position="137"/>
    </location>
</feature>
<feature type="strand" evidence="17">
    <location>
        <begin position="138"/>
        <end position="141"/>
    </location>
</feature>
<feature type="strand" evidence="14">
    <location>
        <begin position="144"/>
        <end position="146"/>
    </location>
</feature>
<feature type="turn" evidence="14">
    <location>
        <begin position="148"/>
        <end position="151"/>
    </location>
</feature>
<feature type="turn" evidence="14">
    <location>
        <begin position="161"/>
        <end position="165"/>
    </location>
</feature>
<feature type="strand" evidence="14">
    <location>
        <begin position="170"/>
        <end position="174"/>
    </location>
</feature>
<feature type="strand" evidence="14">
    <location>
        <begin position="177"/>
        <end position="181"/>
    </location>
</feature>
<feature type="strand" evidence="14">
    <location>
        <begin position="193"/>
        <end position="199"/>
    </location>
</feature>
<feature type="helix" evidence="14">
    <location>
        <begin position="200"/>
        <end position="203"/>
    </location>
</feature>
<feature type="strand" evidence="14">
    <location>
        <begin position="206"/>
        <end position="208"/>
    </location>
</feature>
<feature type="helix" evidence="14">
    <location>
        <begin position="216"/>
        <end position="219"/>
    </location>
</feature>
<feature type="strand" evidence="14">
    <location>
        <begin position="220"/>
        <end position="222"/>
    </location>
</feature>
<feature type="turn" evidence="14">
    <location>
        <begin position="224"/>
        <end position="226"/>
    </location>
</feature>
<feature type="strand" evidence="14">
    <location>
        <begin position="229"/>
        <end position="238"/>
    </location>
</feature>
<feature type="helix" evidence="14">
    <location>
        <begin position="240"/>
        <end position="248"/>
    </location>
</feature>
<feature type="turn" evidence="14">
    <location>
        <begin position="249"/>
        <end position="251"/>
    </location>
</feature>
<feature type="helix" evidence="14">
    <location>
        <begin position="260"/>
        <end position="269"/>
    </location>
</feature>
<feature type="turn" evidence="14">
    <location>
        <begin position="270"/>
        <end position="272"/>
    </location>
</feature>
<feature type="strand" evidence="14">
    <location>
        <begin position="277"/>
        <end position="282"/>
    </location>
</feature>
<feature type="strand" evidence="15">
    <location>
        <begin position="286"/>
        <end position="288"/>
    </location>
</feature>
<feature type="strand" evidence="18">
    <location>
        <begin position="290"/>
        <end position="292"/>
    </location>
</feature>
<feature type="strand" evidence="14">
    <location>
        <begin position="316"/>
        <end position="319"/>
    </location>
</feature>
<feature type="helix" evidence="14">
    <location>
        <begin position="321"/>
        <end position="323"/>
    </location>
</feature>
<feature type="strand" evidence="14">
    <location>
        <begin position="327"/>
        <end position="330"/>
    </location>
</feature>
<feature type="strand" evidence="14">
    <location>
        <begin position="336"/>
        <end position="342"/>
    </location>
</feature>
<feature type="strand" evidence="14">
    <location>
        <begin position="367"/>
        <end position="369"/>
    </location>
</feature>
<feature type="strand" evidence="14">
    <location>
        <begin position="372"/>
        <end position="382"/>
    </location>
</feature>
<feature type="helix" evidence="14">
    <location>
        <begin position="384"/>
        <end position="393"/>
    </location>
</feature>
<feature type="strand" evidence="16">
    <location>
        <begin position="396"/>
        <end position="398"/>
    </location>
</feature>
<feature type="helix" evidence="14">
    <location>
        <begin position="404"/>
        <end position="412"/>
    </location>
</feature>
<feature type="strand" evidence="14">
    <location>
        <begin position="421"/>
        <end position="427"/>
    </location>
</feature>
<feature type="strand" evidence="14">
    <location>
        <begin position="429"/>
        <end position="431"/>
    </location>
</feature>
<feature type="strand" evidence="17">
    <location>
        <begin position="438"/>
        <end position="440"/>
    </location>
</feature>
<feature type="helix" evidence="16">
    <location>
        <begin position="456"/>
        <end position="458"/>
    </location>
</feature>
<feature type="strand" evidence="14">
    <location>
        <begin position="463"/>
        <end position="467"/>
    </location>
</feature>
<feature type="turn" evidence="14">
    <location>
        <begin position="468"/>
        <end position="471"/>
    </location>
</feature>
<feature type="strand" evidence="14">
    <location>
        <begin position="472"/>
        <end position="476"/>
    </location>
</feature>
<feature type="strand" evidence="14">
    <location>
        <begin position="478"/>
        <end position="480"/>
    </location>
</feature>
<feature type="strand" evidence="14">
    <location>
        <begin position="482"/>
        <end position="489"/>
    </location>
</feature>
<feature type="strand" evidence="15">
    <location>
        <begin position="509"/>
        <end position="511"/>
    </location>
</feature>
<feature type="strand" evidence="15">
    <location>
        <begin position="514"/>
        <end position="518"/>
    </location>
</feature>
<feature type="helix" evidence="15">
    <location>
        <begin position="525"/>
        <end position="534"/>
    </location>
</feature>
<feature type="helix" evidence="15">
    <location>
        <begin position="545"/>
        <end position="554"/>
    </location>
</feature>
<feature type="strand" evidence="15">
    <location>
        <begin position="555"/>
        <end position="559"/>
    </location>
</feature>
<feature type="strand" evidence="15">
    <location>
        <begin position="561"/>
        <end position="572"/>
    </location>
</feature>
<feature type="strand" evidence="15">
    <location>
        <begin position="575"/>
        <end position="577"/>
    </location>
</feature>
<feature type="strand" evidence="15">
    <location>
        <begin position="599"/>
        <end position="604"/>
    </location>
</feature>
<feature type="helix" evidence="15">
    <location>
        <begin position="606"/>
        <end position="608"/>
    </location>
</feature>
<feature type="strand" evidence="15">
    <location>
        <begin position="612"/>
        <end position="615"/>
    </location>
</feature>
<feature type="strand" evidence="15">
    <location>
        <begin position="624"/>
        <end position="628"/>
    </location>
</feature>
<feature type="turn" evidence="21">
    <location>
        <begin position="648"/>
        <end position="650"/>
    </location>
</feature>
<feature type="strand" evidence="20">
    <location>
        <begin position="655"/>
        <end position="657"/>
    </location>
</feature>
<feature type="strand" evidence="19">
    <location>
        <begin position="659"/>
        <end position="663"/>
    </location>
</feature>
<feature type="helix" evidence="21">
    <location>
        <begin position="667"/>
        <end position="669"/>
    </location>
</feature>
<feature type="helix" evidence="19">
    <location>
        <begin position="673"/>
        <end position="682"/>
    </location>
</feature>
<feature type="strand" evidence="20">
    <location>
        <begin position="685"/>
        <end position="687"/>
    </location>
</feature>
<feature type="helix" evidence="19">
    <location>
        <begin position="693"/>
        <end position="706"/>
    </location>
</feature>
<feature type="strand" evidence="19">
    <location>
        <begin position="712"/>
        <end position="719"/>
    </location>
</feature>
<feature type="turn" evidence="19">
    <location>
        <begin position="722"/>
        <end position="724"/>
    </location>
</feature>
<feature type="strand" evidence="19">
    <location>
        <begin position="726"/>
        <end position="728"/>
    </location>
</feature>
<feature type="helix" evidence="19">
    <location>
        <begin position="747"/>
        <end position="749"/>
    </location>
</feature>
<feature type="strand" evidence="19">
    <location>
        <begin position="753"/>
        <end position="757"/>
    </location>
</feature>
<feature type="strand" evidence="19">
    <location>
        <begin position="764"/>
        <end position="767"/>
    </location>
</feature>
<feature type="strand" evidence="19">
    <location>
        <begin position="773"/>
        <end position="779"/>
    </location>
</feature>
<proteinExistence type="evidence at protein level"/>
<organism>
    <name type="scientific">Homo sapiens</name>
    <name type="common">Human</name>
    <dbReference type="NCBI Taxonomy" id="9606"/>
    <lineage>
        <taxon>Eukaryota</taxon>
        <taxon>Metazoa</taxon>
        <taxon>Chordata</taxon>
        <taxon>Craniata</taxon>
        <taxon>Vertebrata</taxon>
        <taxon>Euteleostomi</taxon>
        <taxon>Mammalia</taxon>
        <taxon>Eutheria</taxon>
        <taxon>Euarchontoglires</taxon>
        <taxon>Primates</taxon>
        <taxon>Haplorrhini</taxon>
        <taxon>Catarrhini</taxon>
        <taxon>Hominidae</taxon>
        <taxon>Homo</taxon>
    </lineage>
</organism>
<accession>P22897</accession>
<accession>A5PKW3</accession>
<accession>Q5VSJ2</accession>
<accession>Q5VSK2</accession>
<reference key="1">
    <citation type="journal article" date="1990" name="J. Biol. Chem.">
        <title>Primary structure of the mannose receptor contains multiple motifs resembling carbohydrate-recognition domains.</title>
        <authorList>
            <person name="Taylor M.E."/>
            <person name="Conary J.T."/>
            <person name="Lennartz M.R."/>
            <person name="Stahl P.D."/>
            <person name="Drickamer K."/>
        </authorList>
    </citation>
    <scope>NUCLEOTIDE SEQUENCE [MRNA] (ISOFORM 1)</scope>
    <scope>PARTIAL PROTEIN SEQUENCE</scope>
    <source>
        <tissue>Placenta</tissue>
    </source>
</reference>
<reference key="2">
    <citation type="journal article" date="1990" name="J. Exp. Med.">
        <title>Molecular characterization of the human macrophage mannose receptor: demonstration of multiple carbohydrate recognition-like domains and phagocytosis of yeasts in Cos-1 cells.</title>
        <authorList>
            <person name="Ezekowitz R.A."/>
            <person name="Sastry K."/>
            <person name="Bailly P."/>
            <person name="Warner A."/>
        </authorList>
    </citation>
    <scope>NUCLEOTIDE SEQUENCE [MRNA] (ISOFORM 1)</scope>
</reference>
<reference key="3">
    <citation type="journal article" date="1992" name="Genomics">
        <title>Organization of the gene encoding the human macrophage mannose receptor (MRC1).</title>
        <authorList>
            <person name="Kim S.J."/>
            <person name="Ruiz N."/>
            <person name="Bezouska K."/>
            <person name="Drickamer K."/>
        </authorList>
    </citation>
    <scope>NUCLEOTIDE SEQUENCE [GENOMIC DNA]</scope>
</reference>
<reference key="4">
    <citation type="submission" date="2007-02" db="EMBL/GenBank/DDBJ databases">
        <authorList>
            <consortium name="NHLBI resequencing and genotyping service (RS&amp;G)"/>
        </authorList>
    </citation>
    <scope>NUCLEOTIDE SEQUENCE [GENOMIC DNA]</scope>
</reference>
<reference key="5">
    <citation type="journal article" date="2004" name="Nature">
        <title>The DNA sequence and comparative analysis of human chromosome 10.</title>
        <authorList>
            <person name="Deloukas P."/>
            <person name="Earthrowl M.E."/>
            <person name="Grafham D.V."/>
            <person name="Rubenfield M."/>
            <person name="French L."/>
            <person name="Steward C.A."/>
            <person name="Sims S.K."/>
            <person name="Jones M.C."/>
            <person name="Searle S."/>
            <person name="Scott C."/>
            <person name="Howe K."/>
            <person name="Hunt S.E."/>
            <person name="Andrews T.D."/>
            <person name="Gilbert J.G.R."/>
            <person name="Swarbreck D."/>
            <person name="Ashurst J.L."/>
            <person name="Taylor A."/>
            <person name="Battles J."/>
            <person name="Bird C.P."/>
            <person name="Ainscough R."/>
            <person name="Almeida J.P."/>
            <person name="Ashwell R.I.S."/>
            <person name="Ambrose K.D."/>
            <person name="Babbage A.K."/>
            <person name="Bagguley C.L."/>
            <person name="Bailey J."/>
            <person name="Banerjee R."/>
            <person name="Bates K."/>
            <person name="Beasley H."/>
            <person name="Bray-Allen S."/>
            <person name="Brown A.J."/>
            <person name="Brown J.Y."/>
            <person name="Burford D.C."/>
            <person name="Burrill W."/>
            <person name="Burton J."/>
            <person name="Cahill P."/>
            <person name="Camire D."/>
            <person name="Carter N.P."/>
            <person name="Chapman J.C."/>
            <person name="Clark S.Y."/>
            <person name="Clarke G."/>
            <person name="Clee C.M."/>
            <person name="Clegg S."/>
            <person name="Corby N."/>
            <person name="Coulson A."/>
            <person name="Dhami P."/>
            <person name="Dutta I."/>
            <person name="Dunn M."/>
            <person name="Faulkner L."/>
            <person name="Frankish A."/>
            <person name="Frankland J.A."/>
            <person name="Garner P."/>
            <person name="Garnett J."/>
            <person name="Gribble S."/>
            <person name="Griffiths C."/>
            <person name="Grocock R."/>
            <person name="Gustafson E."/>
            <person name="Hammond S."/>
            <person name="Harley J.L."/>
            <person name="Hart E."/>
            <person name="Heath P.D."/>
            <person name="Ho T.P."/>
            <person name="Hopkins B."/>
            <person name="Horne J."/>
            <person name="Howden P.J."/>
            <person name="Huckle E."/>
            <person name="Hynds C."/>
            <person name="Johnson C."/>
            <person name="Johnson D."/>
            <person name="Kana A."/>
            <person name="Kay M."/>
            <person name="Kimberley A.M."/>
            <person name="Kershaw J.K."/>
            <person name="Kokkinaki M."/>
            <person name="Laird G.K."/>
            <person name="Lawlor S."/>
            <person name="Lee H.M."/>
            <person name="Leongamornlert D.A."/>
            <person name="Laird G."/>
            <person name="Lloyd C."/>
            <person name="Lloyd D.M."/>
            <person name="Loveland J."/>
            <person name="Lovell J."/>
            <person name="McLaren S."/>
            <person name="McLay K.E."/>
            <person name="McMurray A."/>
            <person name="Mashreghi-Mohammadi M."/>
            <person name="Matthews L."/>
            <person name="Milne S."/>
            <person name="Nickerson T."/>
            <person name="Nguyen M."/>
            <person name="Overton-Larty E."/>
            <person name="Palmer S.A."/>
            <person name="Pearce A.V."/>
            <person name="Peck A.I."/>
            <person name="Pelan S."/>
            <person name="Phillimore B."/>
            <person name="Porter K."/>
            <person name="Rice C.M."/>
            <person name="Rogosin A."/>
            <person name="Ross M.T."/>
            <person name="Sarafidou T."/>
            <person name="Sehra H.K."/>
            <person name="Shownkeen R."/>
            <person name="Skuce C.D."/>
            <person name="Smith M."/>
            <person name="Standring L."/>
            <person name="Sycamore N."/>
            <person name="Tester J."/>
            <person name="Thorpe A."/>
            <person name="Torcasso W."/>
            <person name="Tracey A."/>
            <person name="Tromans A."/>
            <person name="Tsolas J."/>
            <person name="Wall M."/>
            <person name="Walsh J."/>
            <person name="Wang H."/>
            <person name="Weinstock K."/>
            <person name="West A.P."/>
            <person name="Willey D.L."/>
            <person name="Whitehead S.L."/>
            <person name="Wilming L."/>
            <person name="Wray P.W."/>
            <person name="Young L."/>
            <person name="Chen Y."/>
            <person name="Lovering R.C."/>
            <person name="Moschonas N.K."/>
            <person name="Siebert R."/>
            <person name="Fechtel K."/>
            <person name="Bentley D."/>
            <person name="Durbin R.M."/>
            <person name="Hubbard T."/>
            <person name="Doucette-Stamm L."/>
            <person name="Beck S."/>
            <person name="Smith D.R."/>
            <person name="Rogers J."/>
        </authorList>
    </citation>
    <scope>NUCLEOTIDE SEQUENCE [LARGE SCALE GENOMIC DNA]</scope>
</reference>
<reference key="6">
    <citation type="journal article" date="2004" name="Genome Res.">
        <title>The status, quality, and expansion of the NIH full-length cDNA project: the Mammalian Gene Collection (MGC).</title>
        <authorList>
            <consortium name="The MGC Project Team"/>
        </authorList>
    </citation>
    <scope>NUCLEOTIDE SEQUENCE [LARGE SCALE MRNA] (ISOFORM 2)</scope>
    <scope>VARIANTS SER-396; ALA-399 AND PHE-407</scope>
</reference>
<reference key="7">
    <citation type="journal article" date="1992" name="J. Biol. Chem.">
        <title>Contribution to ligand binding by multiple carbohydrate-recognition domains in the macrophage mannose receptor.</title>
        <authorList>
            <person name="Taylor M.E."/>
            <person name="Bezouska K."/>
            <person name="Drickamer K."/>
        </authorList>
    </citation>
    <scope>STUDIES ON THE BINDING OF INDIVIDUAL LECTIN DOMAINS</scope>
</reference>
<reference key="8">
    <citation type="journal article" date="2008" name="Proteomics">
        <title>Identification of N-linked glycoproteins in human milk by hydrophilic interaction liquid chromatography and mass spectrometry.</title>
        <authorList>
            <person name="Picariello G."/>
            <person name="Ferranti P."/>
            <person name="Mamone G."/>
            <person name="Roepstorff P."/>
            <person name="Addeo F."/>
        </authorList>
    </citation>
    <scope>GLYCOSYLATION [LARGE SCALE ANALYSIS] AT ASN-1205</scope>
    <source>
        <tissue>Milk</tissue>
    </source>
</reference>
<reference key="9">
    <citation type="journal article" date="2008" name="PLoS Pathog.">
        <title>The mannose receptor mediates dengue virus infection of macrophages.</title>
        <authorList>
            <person name="Miller J.L."/>
            <person name="de Wet B.J."/>
            <person name="deWet B.J."/>
            <person name="Martinez-Pomares L."/>
            <person name="Radcliffe C.M."/>
            <person name="Dwek R.A."/>
            <person name="Rudd P.M."/>
            <person name="Gordon S."/>
        </authorList>
    </citation>
    <scope>FUNCTION (MICROBIAL INFECTION)</scope>
    <scope>INTERACTION WITH DENGUE VIRUS ENVELOPE PROTEIN E</scope>
</reference>
<reference key="10">
    <citation type="journal article" date="2009" name="Virology">
        <title>The mannose receptor acts as hepatitis B virus surface antigen receptor mediating interaction with intrahepatic dendritic cells.</title>
        <authorList>
            <person name="Op den Brouw M.L."/>
            <person name="Binda R.S."/>
            <person name="Geijtenbeek T.B."/>
            <person name="Janssen H.L."/>
            <person name="Woltman A.M."/>
        </authorList>
    </citation>
    <scope>FUNCTION (MICROBIAL INFECTION)</scope>
    <scope>INTERACTION WITH HEPATITIS B VIRUS ENVELOPE PROTEIN</scope>
</reference>
<reference key="11">
    <citation type="journal article" date="2014" name="J. Proteomics">
        <title>An enzyme assisted RP-RPLC approach for in-depth analysis of human liver phosphoproteome.</title>
        <authorList>
            <person name="Bian Y."/>
            <person name="Song C."/>
            <person name="Cheng K."/>
            <person name="Dong M."/>
            <person name="Wang F."/>
            <person name="Huang J."/>
            <person name="Sun D."/>
            <person name="Wang L."/>
            <person name="Ye M."/>
            <person name="Zou H."/>
        </authorList>
    </citation>
    <scope>IDENTIFICATION BY MASS SPECTROMETRY [LARGE SCALE ANALYSIS]</scope>
    <source>
        <tissue>Liver</tissue>
    </source>
</reference>
<reference key="12">
    <citation type="journal article" date="2000" name="J. Biol. Chem.">
        <title>Structure of a C-type carbohydrate recognition domain from the macrophage mannose receptor.</title>
        <authorList>
            <person name="Feinberg H."/>
            <person name="Park-Snyder S."/>
            <person name="Kolatkar A.R."/>
            <person name="Heise C.T."/>
            <person name="Taylor M.E."/>
            <person name="Weis W.I."/>
        </authorList>
    </citation>
    <scope>X-RAY CRYSTALLOGRAPHY (2.3 ANGSTROMS) OF 642-788</scope>
</reference>
<reference key="13">
    <citation type="journal article" date="2010" name="Hum. Genet.">
        <title>Genetic and functional analysis of common MRC1 exon 7 polymorphisms in leprosy susceptibility.</title>
        <authorList>
            <person name="Alter A."/>
            <person name="de Leseleuc L."/>
            <person name="Van Thuc N."/>
            <person name="Thai V.H."/>
            <person name="Huong N.T."/>
            <person name="Ba N.N."/>
            <person name="Cardoso C.C."/>
            <person name="Grant A.V."/>
            <person name="Abel L."/>
            <person name="Moraes M.O."/>
            <person name="Alcais A."/>
            <person name="Schurr E."/>
        </authorList>
    </citation>
    <scope>POLYMORPHISM</scope>
    <scope>POSSIBLE ASSOCIATION OF VARIANT SER-396 WITH RESISTANCE TO LEPROSY</scope>
    <scope>VARIANTS ILE-167; ALA-399 AND PHE-407</scope>
    <scope>SUBCELLULAR LOCATION</scope>
</reference>